<organism>
    <name type="scientific">Spodoptera frugiperda ascovirus 1a</name>
    <name type="common">SfAV-1a</name>
    <dbReference type="NCBI Taxonomy" id="113370"/>
    <lineage>
        <taxon>Viruses</taxon>
        <taxon>Varidnaviria</taxon>
        <taxon>Bamfordvirae</taxon>
        <taxon>Nucleocytoviricota</taxon>
        <taxon>Megaviricetes</taxon>
        <taxon>Pimascovirales</taxon>
        <taxon>Ascoviridae</taxon>
        <taxon>Ascovirus</taxon>
        <taxon>Ascovirus sfav1a</taxon>
    </lineage>
</organism>
<accession>Q0E590</accession>
<reference key="1">
    <citation type="journal article" date="2006" name="J. Virol.">
        <title>Genomic sequence of Spodoptera frugiperda Ascovirus 1a, an enveloped, double-stranded DNA insect virus that manipulates apoptosis for viral reproduction.</title>
        <authorList>
            <person name="Bideshi D.K."/>
            <person name="Demattei M.V."/>
            <person name="Rouleux-Bonnin F."/>
            <person name="Stasiak K."/>
            <person name="Tan Y."/>
            <person name="Bigot S."/>
            <person name="Bigot Y."/>
            <person name="Federici B.A."/>
        </authorList>
    </citation>
    <scope>NUCLEOTIDE SEQUENCE [LARGE SCALE GENOMIC DNA]</scope>
</reference>
<gene>
    <name type="ORF">ORF11</name>
</gene>
<feature type="signal peptide" evidence="1">
    <location>
        <begin position="1"/>
        <end position="20"/>
    </location>
</feature>
<feature type="chain" id="PRO_0000330599" description="Uncharacterized protein ORF11">
    <location>
        <begin position="21"/>
        <end position="252"/>
    </location>
</feature>
<comment type="similarity">
    <text evidence="2">Belongs to the ascovirus HvAV ORF17 family.</text>
</comment>
<protein>
    <recommendedName>
        <fullName>Uncharacterized protein ORF11</fullName>
    </recommendedName>
</protein>
<sequence>MIATLGNLIIPVIFVNYVASETYKLTQRAFDTNFSSTRYDLKNSISRSLYDNPCMGDCVNYTCVVNAFGELEICVTAVDTVRIRHPAAGVLQRDVKYCRGSCVNDTNAPWCIVDTSGSFDLCGPFDAGSKVDSLAYEFLEDRVSFTGRSYGCESGCERTTAPCRVGGTSLPVLCSPIAFVLPPTTPTLKRRTKRNAFVDCFSRNTLLGNNVSSSFIKYLDMFNAEWIDYNVRGHQDDDRIRTIHYGHPYCRR</sequence>
<name>Y011_SFAVA</name>
<keyword id="KW-1185">Reference proteome</keyword>
<keyword id="KW-0732">Signal</keyword>
<organismHost>
    <name type="scientific">Spodoptera frugiperda</name>
    <name type="common">Fall armyworm</name>
    <dbReference type="NCBI Taxonomy" id="7108"/>
</organismHost>
<dbReference type="EMBL" id="AM398843">
    <property type="protein sequence ID" value="CAL44611.1"/>
    <property type="molecule type" value="Genomic_DNA"/>
</dbReference>
<dbReference type="KEGG" id="vg:4306178"/>
<dbReference type="OrthoDB" id="35229at10239"/>
<dbReference type="Proteomes" id="UP000008030">
    <property type="component" value="Genome"/>
</dbReference>
<evidence type="ECO:0000255" key="1"/>
<evidence type="ECO:0000305" key="2"/>
<proteinExistence type="inferred from homology"/>